<organism>
    <name type="scientific">Salmonella schwarzengrund (strain CVM19633)</name>
    <dbReference type="NCBI Taxonomy" id="439843"/>
    <lineage>
        <taxon>Bacteria</taxon>
        <taxon>Pseudomonadati</taxon>
        <taxon>Pseudomonadota</taxon>
        <taxon>Gammaproteobacteria</taxon>
        <taxon>Enterobacterales</taxon>
        <taxon>Enterobacteriaceae</taxon>
        <taxon>Salmonella</taxon>
    </lineage>
</organism>
<name>TRHO_SALSV</name>
<evidence type="ECO:0000255" key="1">
    <source>
        <dbReference type="HAMAP-Rule" id="MF_00469"/>
    </source>
</evidence>
<evidence type="ECO:0000256" key="2">
    <source>
        <dbReference type="SAM" id="MobiDB-lite"/>
    </source>
</evidence>
<feature type="chain" id="PRO_1000200378" description="tRNA uridine(34) hydroxylase">
    <location>
        <begin position="1"/>
        <end position="350"/>
    </location>
</feature>
<feature type="domain" description="Rhodanese" evidence="1">
    <location>
        <begin position="146"/>
        <end position="240"/>
    </location>
</feature>
<feature type="region of interest" description="Disordered" evidence="2">
    <location>
        <begin position="319"/>
        <end position="350"/>
    </location>
</feature>
<feature type="compositionally biased region" description="Basic and acidic residues" evidence="2">
    <location>
        <begin position="319"/>
        <end position="328"/>
    </location>
</feature>
<feature type="active site" description="Cysteine persulfide intermediate" evidence="1">
    <location>
        <position position="200"/>
    </location>
</feature>
<sequence>MPVLHNRISNDELKAKMLAESEPRTTISFYKYFTIASPQQTRDALYQVFTALDVFGRVYLAHEGINAQISVPQSKLETFRQQLYTFDPALDGLRLNIALEDDGKSFWVLRMKVRDRIVADGIDDPTFDASNVGDYLKAADVNAMLDDPDAVFIDMRNHYEYEVGHFENALEIPADTFREQLPKAVEMLREHADKKIVMYCTGGIRCEKASAWMKHNGFNKVWHIEGGIIEYARRAREQGLPVRFIGKNFVFDERMGERISDEVIAHCHQCGAPCDSHTNCKNDGCHLLFIQCPQCASKFNGCCSEQCCEELALPEEEQRRRRAGRENGNKIFNKSRGRLNSKLSIPDPAE</sequence>
<proteinExistence type="inferred from homology"/>
<reference key="1">
    <citation type="journal article" date="2011" name="J. Bacteriol.">
        <title>Comparative genomics of 28 Salmonella enterica isolates: evidence for CRISPR-mediated adaptive sublineage evolution.</title>
        <authorList>
            <person name="Fricke W.F."/>
            <person name="Mammel M.K."/>
            <person name="McDermott P.F."/>
            <person name="Tartera C."/>
            <person name="White D.G."/>
            <person name="Leclerc J.E."/>
            <person name="Ravel J."/>
            <person name="Cebula T.A."/>
        </authorList>
    </citation>
    <scope>NUCLEOTIDE SEQUENCE [LARGE SCALE GENOMIC DNA]</scope>
    <source>
        <strain>CVM19633</strain>
    </source>
</reference>
<accession>B4TSR7</accession>
<dbReference type="EC" id="1.14.-.-" evidence="1"/>
<dbReference type="EMBL" id="CP001127">
    <property type="protein sequence ID" value="ACF89264.1"/>
    <property type="molecule type" value="Genomic_DNA"/>
</dbReference>
<dbReference type="RefSeq" id="WP_001144629.1">
    <property type="nucleotide sequence ID" value="NC_011094.1"/>
</dbReference>
<dbReference type="SMR" id="B4TSR7"/>
<dbReference type="KEGG" id="sew:SeSA_A1223"/>
<dbReference type="HOGENOM" id="CLU_038878_1_1_6"/>
<dbReference type="Proteomes" id="UP000001865">
    <property type="component" value="Chromosome"/>
</dbReference>
<dbReference type="GO" id="GO:0016705">
    <property type="term" value="F:oxidoreductase activity, acting on paired donors, with incorporation or reduction of molecular oxygen"/>
    <property type="evidence" value="ECO:0007669"/>
    <property type="project" value="UniProtKB-UniRule"/>
</dbReference>
<dbReference type="GO" id="GO:0006400">
    <property type="term" value="P:tRNA modification"/>
    <property type="evidence" value="ECO:0007669"/>
    <property type="project" value="UniProtKB-UniRule"/>
</dbReference>
<dbReference type="CDD" id="cd01518">
    <property type="entry name" value="RHOD_YceA"/>
    <property type="match status" value="1"/>
</dbReference>
<dbReference type="Gene3D" id="3.30.70.100">
    <property type="match status" value="1"/>
</dbReference>
<dbReference type="Gene3D" id="3.40.250.10">
    <property type="entry name" value="Rhodanese-like domain"/>
    <property type="match status" value="1"/>
</dbReference>
<dbReference type="HAMAP" id="MF_00469">
    <property type="entry name" value="TrhO"/>
    <property type="match status" value="1"/>
</dbReference>
<dbReference type="InterPro" id="IPR001763">
    <property type="entry name" value="Rhodanese-like_dom"/>
</dbReference>
<dbReference type="InterPro" id="IPR036873">
    <property type="entry name" value="Rhodanese-like_dom_sf"/>
</dbReference>
<dbReference type="InterPro" id="IPR022111">
    <property type="entry name" value="Rhodanese_C"/>
</dbReference>
<dbReference type="InterPro" id="IPR020936">
    <property type="entry name" value="TrhO"/>
</dbReference>
<dbReference type="InterPro" id="IPR040503">
    <property type="entry name" value="TRHO_N"/>
</dbReference>
<dbReference type="NCBIfam" id="NF001133">
    <property type="entry name" value="PRK00142.1-1"/>
    <property type="match status" value="1"/>
</dbReference>
<dbReference type="PANTHER" id="PTHR43846:SF1">
    <property type="entry name" value="TRNA URIDINE(34) HYDROXYLASE"/>
    <property type="match status" value="1"/>
</dbReference>
<dbReference type="PANTHER" id="PTHR43846">
    <property type="entry name" value="UPF0176 PROTEIN YCEA"/>
    <property type="match status" value="1"/>
</dbReference>
<dbReference type="Pfam" id="PF00581">
    <property type="entry name" value="Rhodanese"/>
    <property type="match status" value="1"/>
</dbReference>
<dbReference type="Pfam" id="PF12368">
    <property type="entry name" value="Rhodanese_C"/>
    <property type="match status" value="1"/>
</dbReference>
<dbReference type="Pfam" id="PF17773">
    <property type="entry name" value="UPF0176_N"/>
    <property type="match status" value="1"/>
</dbReference>
<dbReference type="SMART" id="SM00450">
    <property type="entry name" value="RHOD"/>
    <property type="match status" value="1"/>
</dbReference>
<dbReference type="SUPFAM" id="SSF52821">
    <property type="entry name" value="Rhodanese/Cell cycle control phosphatase"/>
    <property type="match status" value="1"/>
</dbReference>
<dbReference type="PROSITE" id="PS50206">
    <property type="entry name" value="RHODANESE_3"/>
    <property type="match status" value="1"/>
</dbReference>
<gene>
    <name evidence="1" type="primary">trhO</name>
    <name type="synonym">yceA</name>
    <name type="ordered locus">SeSA_A1223</name>
</gene>
<protein>
    <recommendedName>
        <fullName evidence="1">tRNA uridine(34) hydroxylase</fullName>
        <ecNumber evidence="1">1.14.-.-</ecNumber>
    </recommendedName>
    <alternativeName>
        <fullName evidence="1">tRNA hydroxylation protein O</fullName>
    </alternativeName>
</protein>
<comment type="function">
    <text evidence="1">Catalyzes oxygen-dependent 5-hydroxyuridine (ho5U) modification at position 34 in tRNAs.</text>
</comment>
<comment type="catalytic activity">
    <reaction evidence="1">
        <text>uridine(34) in tRNA + AH2 + O2 = 5-hydroxyuridine(34) in tRNA + A + H2O</text>
        <dbReference type="Rhea" id="RHEA:64224"/>
        <dbReference type="Rhea" id="RHEA-COMP:11727"/>
        <dbReference type="Rhea" id="RHEA-COMP:13381"/>
        <dbReference type="ChEBI" id="CHEBI:13193"/>
        <dbReference type="ChEBI" id="CHEBI:15377"/>
        <dbReference type="ChEBI" id="CHEBI:15379"/>
        <dbReference type="ChEBI" id="CHEBI:17499"/>
        <dbReference type="ChEBI" id="CHEBI:65315"/>
        <dbReference type="ChEBI" id="CHEBI:136877"/>
    </reaction>
</comment>
<comment type="similarity">
    <text evidence="1">Belongs to the TrhO family.</text>
</comment>
<keyword id="KW-0560">Oxidoreductase</keyword>
<keyword id="KW-0819">tRNA processing</keyword>